<proteinExistence type="evidence at protein level"/>
<reference key="1">
    <citation type="journal article" date="2021" name="Biochem. Pharmacol.">
        <title>Multipurpose peptides: the venoms of Amazonian stinging ants contain anthelmintic ponericins with diverse predatory and defensive activities.</title>
        <authorList>
            <person name="Nixon S.A."/>
            <person name="Robinson S.D."/>
            <person name="Agwa A.J."/>
            <person name="Walker A.A."/>
            <person name="Choudhary S."/>
            <person name="Touchard A."/>
            <person name="Undheim E.A.B."/>
            <person name="Robertson A."/>
            <person name="Vetter I."/>
            <person name="Schroeder C.I."/>
            <person name="Kotze A.C."/>
            <person name="Herzig V."/>
            <person name="King G.F."/>
        </authorList>
    </citation>
    <scope>PROTEIN SEQUENCE</scope>
    <scope>FUNCTION</scope>
    <scope>SUBCELLULAR LOCATION</scope>
    <scope>MASS SPECTROMETRY</scope>
    <scope>SYNTHESIS</scope>
    <scope>TOXIC DOSE</scope>
    <scope>BIOASSAY</scope>
    <source>
        <tissue>Venom</tissue>
    </source>
</reference>
<reference key="2">
    <citation type="journal article" date="2014" name="Toxicon">
        <title>Diversity of peptide toxins from stinging ant venoms.</title>
        <authorList>
            <person name="Aili S.R."/>
            <person name="Touchard A."/>
            <person name="Escoubas P."/>
            <person name="Padula M.P."/>
            <person name="Orivel J."/>
            <person name="Dejean A."/>
            <person name="Nicholson G.M."/>
        </authorList>
    </citation>
    <scope>REVIEW</scope>
    <scope>PROTEIN SEQUENCE</scope>
</reference>
<reference key="3">
    <citation type="journal article" date="2016" name="Toxins">
        <title>The biochemical toxin arsenal from ant venoms.</title>
        <authorList>
            <person name="Touchard A."/>
            <person name="Aili S.R."/>
            <person name="Fox E.G."/>
            <person name="Escoubas P."/>
            <person name="Orivel J."/>
            <person name="Nicholson G.M."/>
            <person name="Dejean A."/>
        </authorList>
    </citation>
    <scope>REVIEW</scope>
    <scope>NOMENCLATURE</scope>
</reference>
<sequence length="25" mass="2697">FLGALLKIGAKLLPSVVGLFKKKQQ</sequence>
<keyword id="KW-0044">Antibiotic</keyword>
<keyword id="KW-0929">Antimicrobial</keyword>
<keyword id="KW-0204">Cytolysis</keyword>
<keyword id="KW-0903">Direct protein sequencing</keyword>
<keyword id="KW-0354">Hemolysis</keyword>
<keyword id="KW-0472">Membrane</keyword>
<keyword id="KW-0964">Secreted</keyword>
<keyword id="KW-1052">Target cell membrane</keyword>
<keyword id="KW-1053">Target membrane</keyword>
<keyword id="KW-0800">Toxin</keyword>
<feature type="peptide" id="PRO_0000447119" description="M-poneritoxin-Na1b" evidence="6">
    <location>
        <begin position="1"/>
        <end position="25"/>
    </location>
</feature>
<comment type="function">
    <text evidence="1">Membrane-perturbating peptide with multiple activities (PubMed:34302796). It is insecticidal, since it induces reversible paralysis in insects (L.cuprina) after 1 hour, but fails to kill flies (PubMed:34302796). It shows a relatively strong and broad-spectrum antibacterial activity against both Gram-positive and Gram-negative bacteria (MIC&lt;20 uM) (PubMed:34302796). It is also anthelmintic, since it potently inhibits the larval development of the major pathogenic nematode of ruminants (H.contortus, IC(50)=2.8 uM) (PubMed:34302796). Interestingly, only at 10 uM, it increases adult males motility of the other nematode B.malayi for 24 hours post-treatment, followed by a reduction in motility for the rest of the experiment (PubMed:34302796). It shows cytotoxic activity against HEK293 cells (EC(50)=4-6 uM) and induces hemolysis in human erythrocytes (EC(50)=40-62 uM) (PubMed:34302796). In addition, it causes an important increase in intracellular calcium concentration on neuronal and epithelial cell lines, which supports a non-specific membrane perturbation mechanism of action (PubMed:34302796). In vivo, it induces pain by intraplantar injection into mice, suggesting a defensive function against vertebrate predators (PubMed:34302796).</text>
</comment>
<comment type="subcellular location">
    <subcellularLocation>
        <location evidence="1">Secreted</location>
    </subcellularLocation>
    <subcellularLocation>
        <location evidence="7">Target cell membrane</location>
    </subcellularLocation>
    <text evidence="7">Adopts an alpha-helical conformation in membrane-mimetic environments.</text>
</comment>
<comment type="tissue specificity">
    <text evidence="6">Expressed by the venom gland.</text>
</comment>
<comment type="mass spectrometry" mass="2695.6" method="MALDI" evidence="1">
    <text>Monoisotopic mass.</text>
</comment>
<comment type="toxic dose">
    <text evidence="1">PD(50) is 25.8 nmol/g 1 hour after injection into L.cuprina. LD(50) is &gt;100 nmol/g 24 hours after injection into L.cuprina.</text>
</comment>
<comment type="similarity">
    <text evidence="5">Belongs to the non-disulfide-bridged peptide (NDBP) superfamily. Medium-length antimicrobial peptide (group 3) family. Ponericin-W subfamily.</text>
</comment>
<protein>
    <recommendedName>
        <fullName evidence="4">M-poneritoxin-Na1b</fullName>
        <shortName evidence="4">M-PONTX-Na1b</shortName>
    </recommendedName>
    <alternativeName>
        <fullName evidence="5">Poneratoxin</fullName>
    </alternativeName>
    <alternativeName>
        <fullName evidence="2">Ponericin Pa II2</fullName>
    </alternativeName>
    <alternativeName>
        <fullName evidence="3">U1-poneritoxin-Na1b</fullName>
        <shortName evidence="3">U1-PONTX-Na1b</shortName>
    </alternativeName>
</protein>
<evidence type="ECO:0000269" key="1">
    <source>
    </source>
</evidence>
<evidence type="ECO:0000303" key="2">
    <source>
    </source>
</evidence>
<evidence type="ECO:0000303" key="3">
    <source>
    </source>
</evidence>
<evidence type="ECO:0000303" key="4">
    <source>
    </source>
</evidence>
<evidence type="ECO:0000305" key="5"/>
<evidence type="ECO:0000305" key="6">
    <source>
    </source>
</evidence>
<evidence type="ECO:0000305" key="7">
    <source>
    </source>
</evidence>
<name>WTX1B_NEOAP</name>
<dbReference type="GO" id="GO:0005576">
    <property type="term" value="C:extracellular region"/>
    <property type="evidence" value="ECO:0007669"/>
    <property type="project" value="UniProtKB-SubCell"/>
</dbReference>
<dbReference type="GO" id="GO:0016020">
    <property type="term" value="C:membrane"/>
    <property type="evidence" value="ECO:0007669"/>
    <property type="project" value="UniProtKB-KW"/>
</dbReference>
<dbReference type="GO" id="GO:0044218">
    <property type="term" value="C:other organism cell membrane"/>
    <property type="evidence" value="ECO:0007669"/>
    <property type="project" value="UniProtKB-KW"/>
</dbReference>
<dbReference type="GO" id="GO:0090729">
    <property type="term" value="F:toxin activity"/>
    <property type="evidence" value="ECO:0007669"/>
    <property type="project" value="UniProtKB-KW"/>
</dbReference>
<dbReference type="GO" id="GO:0042742">
    <property type="term" value="P:defense response to bacterium"/>
    <property type="evidence" value="ECO:0007669"/>
    <property type="project" value="UniProtKB-KW"/>
</dbReference>
<dbReference type="GO" id="GO:0031640">
    <property type="term" value="P:killing of cells of another organism"/>
    <property type="evidence" value="ECO:0007669"/>
    <property type="project" value="UniProtKB-KW"/>
</dbReference>
<dbReference type="InterPro" id="IPR012523">
    <property type="entry name" value="Antimicrobial_4"/>
</dbReference>
<dbReference type="Pfam" id="PF08024">
    <property type="entry name" value="Antimicrobial_4"/>
    <property type="match status" value="1"/>
</dbReference>
<organism>
    <name type="scientific">Neoponera apicalis</name>
    <name type="common">Ant</name>
    <name type="synonym">Pachycondyla apicalis</name>
    <dbReference type="NCBI Taxonomy" id="2320211"/>
    <lineage>
        <taxon>Eukaryota</taxon>
        <taxon>Metazoa</taxon>
        <taxon>Ecdysozoa</taxon>
        <taxon>Arthropoda</taxon>
        <taxon>Hexapoda</taxon>
        <taxon>Insecta</taxon>
        <taxon>Pterygota</taxon>
        <taxon>Neoptera</taxon>
        <taxon>Endopterygota</taxon>
        <taxon>Hymenoptera</taxon>
        <taxon>Apocrita</taxon>
        <taxon>Aculeata</taxon>
        <taxon>Formicoidea</taxon>
        <taxon>Formicidae</taxon>
        <taxon>Ponerinae</taxon>
        <taxon>Ponerini</taxon>
        <taxon>Neoponera</taxon>
    </lineage>
</organism>
<accession>P0DSM4</accession>